<proteinExistence type="inferred from homology"/>
<feature type="chain" id="PRO_1000026103" description="ATP-dependent Clp protease proteolytic subunit">
    <location>
        <begin position="1"/>
        <end position="195"/>
    </location>
</feature>
<feature type="active site" description="Nucleophile" evidence="1">
    <location>
        <position position="97"/>
    </location>
</feature>
<feature type="active site" evidence="1">
    <location>
        <position position="122"/>
    </location>
</feature>
<accession>Q042E8</accession>
<comment type="function">
    <text evidence="1">Cleaves peptides in various proteins in a process that requires ATP hydrolysis. Has a chymotrypsin-like activity. Plays a major role in the degradation of misfolded proteins.</text>
</comment>
<comment type="catalytic activity">
    <reaction evidence="1">
        <text>Hydrolysis of proteins to small peptides in the presence of ATP and magnesium. alpha-casein is the usual test substrate. In the absence of ATP, only oligopeptides shorter than five residues are hydrolyzed (such as succinyl-Leu-Tyr-|-NHMec, and Leu-Tyr-Leu-|-Tyr-Trp, in which cleavage of the -Tyr-|-Leu- and -Tyr-|-Trp bonds also occurs).</text>
        <dbReference type="EC" id="3.4.21.92"/>
    </reaction>
</comment>
<comment type="subunit">
    <text evidence="1">Fourteen ClpP subunits assemble into 2 heptameric rings which stack back to back to give a disk-like structure with a central cavity, resembling the structure of eukaryotic proteasomes.</text>
</comment>
<comment type="subcellular location">
    <subcellularLocation>
        <location evidence="1">Cytoplasm</location>
    </subcellularLocation>
</comment>
<comment type="similarity">
    <text evidence="1">Belongs to the peptidase S14 family.</text>
</comment>
<protein>
    <recommendedName>
        <fullName evidence="1">ATP-dependent Clp protease proteolytic subunit</fullName>
        <ecNumber evidence="1">3.4.21.92</ecNumber>
    </recommendedName>
    <alternativeName>
        <fullName evidence="1">Endopeptidase Clp</fullName>
    </alternativeName>
</protein>
<name>CLPP_LACGA</name>
<dbReference type="EC" id="3.4.21.92" evidence="1"/>
<dbReference type="EMBL" id="CP000413">
    <property type="protein sequence ID" value="ABJ60674.1"/>
    <property type="molecule type" value="Genomic_DNA"/>
</dbReference>
<dbReference type="RefSeq" id="WP_003647009.1">
    <property type="nucleotide sequence ID" value="NZ_WBMG01000002.1"/>
</dbReference>
<dbReference type="SMR" id="Q042E8"/>
<dbReference type="MEROPS" id="S14.001"/>
<dbReference type="GeneID" id="83570734"/>
<dbReference type="KEGG" id="lga:LGAS_1312"/>
<dbReference type="HOGENOM" id="CLU_058707_3_2_9"/>
<dbReference type="BioCyc" id="LGAS324831:G1G6Y-1306-MONOMER"/>
<dbReference type="Proteomes" id="UP000000664">
    <property type="component" value="Chromosome"/>
</dbReference>
<dbReference type="GO" id="GO:0005737">
    <property type="term" value="C:cytoplasm"/>
    <property type="evidence" value="ECO:0007669"/>
    <property type="project" value="UniProtKB-SubCell"/>
</dbReference>
<dbReference type="GO" id="GO:0009368">
    <property type="term" value="C:endopeptidase Clp complex"/>
    <property type="evidence" value="ECO:0007669"/>
    <property type="project" value="TreeGrafter"/>
</dbReference>
<dbReference type="GO" id="GO:0004176">
    <property type="term" value="F:ATP-dependent peptidase activity"/>
    <property type="evidence" value="ECO:0007669"/>
    <property type="project" value="InterPro"/>
</dbReference>
<dbReference type="GO" id="GO:0051117">
    <property type="term" value="F:ATPase binding"/>
    <property type="evidence" value="ECO:0007669"/>
    <property type="project" value="TreeGrafter"/>
</dbReference>
<dbReference type="GO" id="GO:0004252">
    <property type="term" value="F:serine-type endopeptidase activity"/>
    <property type="evidence" value="ECO:0007669"/>
    <property type="project" value="UniProtKB-UniRule"/>
</dbReference>
<dbReference type="GO" id="GO:0006515">
    <property type="term" value="P:protein quality control for misfolded or incompletely synthesized proteins"/>
    <property type="evidence" value="ECO:0007669"/>
    <property type="project" value="TreeGrafter"/>
</dbReference>
<dbReference type="CDD" id="cd07017">
    <property type="entry name" value="S14_ClpP_2"/>
    <property type="match status" value="1"/>
</dbReference>
<dbReference type="FunFam" id="3.90.226.10:FF:000001">
    <property type="entry name" value="ATP-dependent Clp protease proteolytic subunit"/>
    <property type="match status" value="1"/>
</dbReference>
<dbReference type="Gene3D" id="3.90.226.10">
    <property type="entry name" value="2-enoyl-CoA Hydratase, Chain A, domain 1"/>
    <property type="match status" value="1"/>
</dbReference>
<dbReference type="HAMAP" id="MF_00444">
    <property type="entry name" value="ClpP"/>
    <property type="match status" value="1"/>
</dbReference>
<dbReference type="InterPro" id="IPR001907">
    <property type="entry name" value="ClpP"/>
</dbReference>
<dbReference type="InterPro" id="IPR029045">
    <property type="entry name" value="ClpP/crotonase-like_dom_sf"/>
</dbReference>
<dbReference type="InterPro" id="IPR023562">
    <property type="entry name" value="ClpP/TepA"/>
</dbReference>
<dbReference type="InterPro" id="IPR033135">
    <property type="entry name" value="ClpP_His_AS"/>
</dbReference>
<dbReference type="InterPro" id="IPR018215">
    <property type="entry name" value="ClpP_Ser_AS"/>
</dbReference>
<dbReference type="NCBIfam" id="TIGR00493">
    <property type="entry name" value="clpP"/>
    <property type="match status" value="1"/>
</dbReference>
<dbReference type="NCBIfam" id="NF001368">
    <property type="entry name" value="PRK00277.1"/>
    <property type="match status" value="1"/>
</dbReference>
<dbReference type="NCBIfam" id="NF009205">
    <property type="entry name" value="PRK12553.1"/>
    <property type="match status" value="1"/>
</dbReference>
<dbReference type="PANTHER" id="PTHR10381">
    <property type="entry name" value="ATP-DEPENDENT CLP PROTEASE PROTEOLYTIC SUBUNIT"/>
    <property type="match status" value="1"/>
</dbReference>
<dbReference type="PANTHER" id="PTHR10381:SF70">
    <property type="entry name" value="ATP-DEPENDENT CLP PROTEASE PROTEOLYTIC SUBUNIT"/>
    <property type="match status" value="1"/>
</dbReference>
<dbReference type="Pfam" id="PF00574">
    <property type="entry name" value="CLP_protease"/>
    <property type="match status" value="1"/>
</dbReference>
<dbReference type="PRINTS" id="PR00127">
    <property type="entry name" value="CLPPROTEASEP"/>
</dbReference>
<dbReference type="SUPFAM" id="SSF52096">
    <property type="entry name" value="ClpP/crotonase"/>
    <property type="match status" value="1"/>
</dbReference>
<dbReference type="PROSITE" id="PS00382">
    <property type="entry name" value="CLP_PROTEASE_HIS"/>
    <property type="match status" value="1"/>
</dbReference>
<dbReference type="PROSITE" id="PS00381">
    <property type="entry name" value="CLP_PROTEASE_SER"/>
    <property type="match status" value="1"/>
</dbReference>
<sequence>MLVPTVIEQTARGERAYDIYSRLLKDRIIMLSGEINDQMANSIIAQLLFLDAQDNTKDISLYINSPGGVITSGLAIMDTMNFIKSDVSTIAIGMAASMASILLTSGTKGKRFALPNSTVLIHQPLGGAQGQQTDIQIAANEILKSRKKLNQILHETTGQPLDKILKDTERDNYLSAEEAKDYGLIDEILVNQKKD</sequence>
<gene>
    <name evidence="1" type="primary">clpP</name>
    <name type="ordered locus">LGAS_1312</name>
</gene>
<keyword id="KW-0963">Cytoplasm</keyword>
<keyword id="KW-0378">Hydrolase</keyword>
<keyword id="KW-0645">Protease</keyword>
<keyword id="KW-0720">Serine protease</keyword>
<evidence type="ECO:0000255" key="1">
    <source>
        <dbReference type="HAMAP-Rule" id="MF_00444"/>
    </source>
</evidence>
<reference key="1">
    <citation type="journal article" date="2006" name="Proc. Natl. Acad. Sci. U.S.A.">
        <title>Comparative genomics of the lactic acid bacteria.</title>
        <authorList>
            <person name="Makarova K.S."/>
            <person name="Slesarev A."/>
            <person name="Wolf Y.I."/>
            <person name="Sorokin A."/>
            <person name="Mirkin B."/>
            <person name="Koonin E.V."/>
            <person name="Pavlov A."/>
            <person name="Pavlova N."/>
            <person name="Karamychev V."/>
            <person name="Polouchine N."/>
            <person name="Shakhova V."/>
            <person name="Grigoriev I."/>
            <person name="Lou Y."/>
            <person name="Rohksar D."/>
            <person name="Lucas S."/>
            <person name="Huang K."/>
            <person name="Goodstein D.M."/>
            <person name="Hawkins T."/>
            <person name="Plengvidhya V."/>
            <person name="Welker D."/>
            <person name="Hughes J."/>
            <person name="Goh Y."/>
            <person name="Benson A."/>
            <person name="Baldwin K."/>
            <person name="Lee J.-H."/>
            <person name="Diaz-Muniz I."/>
            <person name="Dosti B."/>
            <person name="Smeianov V."/>
            <person name="Wechter W."/>
            <person name="Barabote R."/>
            <person name="Lorca G."/>
            <person name="Altermann E."/>
            <person name="Barrangou R."/>
            <person name="Ganesan B."/>
            <person name="Xie Y."/>
            <person name="Rawsthorne H."/>
            <person name="Tamir D."/>
            <person name="Parker C."/>
            <person name="Breidt F."/>
            <person name="Broadbent J.R."/>
            <person name="Hutkins R."/>
            <person name="O'Sullivan D."/>
            <person name="Steele J."/>
            <person name="Unlu G."/>
            <person name="Saier M.H. Jr."/>
            <person name="Klaenhammer T."/>
            <person name="Richardson P."/>
            <person name="Kozyavkin S."/>
            <person name="Weimer B.C."/>
            <person name="Mills D.A."/>
        </authorList>
    </citation>
    <scope>NUCLEOTIDE SEQUENCE [LARGE SCALE GENOMIC DNA]</scope>
    <source>
        <strain>ATCC 33323 / DSM 20243 / BCRC 14619 / CIP 102991 / JCM 1131 / KCTC 3163 / NCIMB 11718 / NCTC 13722 / AM63</strain>
    </source>
</reference>
<organism>
    <name type="scientific">Lactobacillus gasseri (strain ATCC 33323 / DSM 20243 / BCRC 14619 / CIP 102991 / JCM 1131 / KCTC 3163 / NCIMB 11718 / NCTC 13722 / AM63)</name>
    <dbReference type="NCBI Taxonomy" id="324831"/>
    <lineage>
        <taxon>Bacteria</taxon>
        <taxon>Bacillati</taxon>
        <taxon>Bacillota</taxon>
        <taxon>Bacilli</taxon>
        <taxon>Lactobacillales</taxon>
        <taxon>Lactobacillaceae</taxon>
        <taxon>Lactobacillus</taxon>
    </lineage>
</organism>